<dbReference type="EC" id="6.2.1.5" evidence="1"/>
<dbReference type="EMBL" id="BA000018">
    <property type="protein sequence ID" value="BAB42340.1"/>
    <property type="molecule type" value="Genomic_DNA"/>
</dbReference>
<dbReference type="PIR" id="H89897">
    <property type="entry name" value="H89897"/>
</dbReference>
<dbReference type="RefSeq" id="WP_001020801.1">
    <property type="nucleotide sequence ID" value="NC_002745.2"/>
</dbReference>
<dbReference type="SMR" id="P99071"/>
<dbReference type="EnsemblBacteria" id="BAB42340">
    <property type="protein sequence ID" value="BAB42340"/>
    <property type="gene ID" value="BAB42340"/>
</dbReference>
<dbReference type="KEGG" id="sau:SA1088"/>
<dbReference type="HOGENOM" id="CLU_037430_0_2_9"/>
<dbReference type="UniPathway" id="UPA00223">
    <property type="reaction ID" value="UER00999"/>
</dbReference>
<dbReference type="GO" id="GO:0005829">
    <property type="term" value="C:cytosol"/>
    <property type="evidence" value="ECO:0007669"/>
    <property type="project" value="TreeGrafter"/>
</dbReference>
<dbReference type="GO" id="GO:0042709">
    <property type="term" value="C:succinate-CoA ligase complex"/>
    <property type="evidence" value="ECO:0007669"/>
    <property type="project" value="TreeGrafter"/>
</dbReference>
<dbReference type="GO" id="GO:0005524">
    <property type="term" value="F:ATP binding"/>
    <property type="evidence" value="ECO:0007669"/>
    <property type="project" value="UniProtKB-UniRule"/>
</dbReference>
<dbReference type="GO" id="GO:0000287">
    <property type="term" value="F:magnesium ion binding"/>
    <property type="evidence" value="ECO:0007669"/>
    <property type="project" value="UniProtKB-UniRule"/>
</dbReference>
<dbReference type="GO" id="GO:0004775">
    <property type="term" value="F:succinate-CoA ligase (ADP-forming) activity"/>
    <property type="evidence" value="ECO:0007669"/>
    <property type="project" value="UniProtKB-UniRule"/>
</dbReference>
<dbReference type="GO" id="GO:0004776">
    <property type="term" value="F:succinate-CoA ligase (GDP-forming) activity"/>
    <property type="evidence" value="ECO:0007669"/>
    <property type="project" value="RHEA"/>
</dbReference>
<dbReference type="GO" id="GO:0006104">
    <property type="term" value="P:succinyl-CoA metabolic process"/>
    <property type="evidence" value="ECO:0007669"/>
    <property type="project" value="TreeGrafter"/>
</dbReference>
<dbReference type="GO" id="GO:0006099">
    <property type="term" value="P:tricarboxylic acid cycle"/>
    <property type="evidence" value="ECO:0007669"/>
    <property type="project" value="UniProtKB-UniRule"/>
</dbReference>
<dbReference type="FunFam" id="3.30.1490.20:FF:000002">
    <property type="entry name" value="Succinate--CoA ligase [ADP-forming] subunit beta"/>
    <property type="match status" value="1"/>
</dbReference>
<dbReference type="FunFam" id="3.30.470.20:FF:000002">
    <property type="entry name" value="Succinate--CoA ligase [ADP-forming] subunit beta"/>
    <property type="match status" value="1"/>
</dbReference>
<dbReference type="FunFam" id="3.40.50.261:FF:000001">
    <property type="entry name" value="Succinate--CoA ligase [ADP-forming] subunit beta"/>
    <property type="match status" value="1"/>
</dbReference>
<dbReference type="Gene3D" id="3.30.1490.20">
    <property type="entry name" value="ATP-grasp fold, A domain"/>
    <property type="match status" value="1"/>
</dbReference>
<dbReference type="Gene3D" id="3.30.470.20">
    <property type="entry name" value="ATP-grasp fold, B domain"/>
    <property type="match status" value="1"/>
</dbReference>
<dbReference type="Gene3D" id="3.40.50.261">
    <property type="entry name" value="Succinyl-CoA synthetase domains"/>
    <property type="match status" value="1"/>
</dbReference>
<dbReference type="HAMAP" id="MF_00558">
    <property type="entry name" value="Succ_CoA_beta"/>
    <property type="match status" value="1"/>
</dbReference>
<dbReference type="InterPro" id="IPR011761">
    <property type="entry name" value="ATP-grasp"/>
</dbReference>
<dbReference type="InterPro" id="IPR013650">
    <property type="entry name" value="ATP-grasp_succ-CoA_synth-type"/>
</dbReference>
<dbReference type="InterPro" id="IPR013815">
    <property type="entry name" value="ATP_grasp_subdomain_1"/>
</dbReference>
<dbReference type="InterPro" id="IPR017866">
    <property type="entry name" value="Succ-CoA_synthase_bsu_CS"/>
</dbReference>
<dbReference type="InterPro" id="IPR005811">
    <property type="entry name" value="SUCC_ACL_C"/>
</dbReference>
<dbReference type="InterPro" id="IPR005809">
    <property type="entry name" value="Succ_CoA_ligase-like_bsu"/>
</dbReference>
<dbReference type="InterPro" id="IPR016102">
    <property type="entry name" value="Succinyl-CoA_synth-like"/>
</dbReference>
<dbReference type="NCBIfam" id="NF001913">
    <property type="entry name" value="PRK00696.1"/>
    <property type="match status" value="1"/>
</dbReference>
<dbReference type="NCBIfam" id="TIGR01016">
    <property type="entry name" value="sucCoAbeta"/>
    <property type="match status" value="1"/>
</dbReference>
<dbReference type="PANTHER" id="PTHR11815:SF10">
    <property type="entry name" value="SUCCINATE--COA LIGASE [GDP-FORMING] SUBUNIT BETA, MITOCHONDRIAL"/>
    <property type="match status" value="1"/>
</dbReference>
<dbReference type="PANTHER" id="PTHR11815">
    <property type="entry name" value="SUCCINYL-COA SYNTHETASE BETA CHAIN"/>
    <property type="match status" value="1"/>
</dbReference>
<dbReference type="Pfam" id="PF08442">
    <property type="entry name" value="ATP-grasp_2"/>
    <property type="match status" value="1"/>
</dbReference>
<dbReference type="Pfam" id="PF00549">
    <property type="entry name" value="Ligase_CoA"/>
    <property type="match status" value="1"/>
</dbReference>
<dbReference type="PIRSF" id="PIRSF001554">
    <property type="entry name" value="SucCS_beta"/>
    <property type="match status" value="1"/>
</dbReference>
<dbReference type="SUPFAM" id="SSF56059">
    <property type="entry name" value="Glutathione synthetase ATP-binding domain-like"/>
    <property type="match status" value="1"/>
</dbReference>
<dbReference type="SUPFAM" id="SSF52210">
    <property type="entry name" value="Succinyl-CoA synthetase domains"/>
    <property type="match status" value="1"/>
</dbReference>
<dbReference type="PROSITE" id="PS50975">
    <property type="entry name" value="ATP_GRASP"/>
    <property type="match status" value="1"/>
</dbReference>
<dbReference type="PROSITE" id="PS01217">
    <property type="entry name" value="SUCCINYL_COA_LIG_3"/>
    <property type="match status" value="1"/>
</dbReference>
<feature type="chain" id="PRO_0000102861" description="Succinate--CoA ligase [ADP-forming] subunit beta">
    <location>
        <begin position="1"/>
        <end position="388"/>
    </location>
</feature>
<feature type="domain" description="ATP-grasp" evidence="1">
    <location>
        <begin position="9"/>
        <end position="244"/>
    </location>
</feature>
<feature type="binding site" evidence="1">
    <location>
        <position position="46"/>
    </location>
    <ligand>
        <name>ATP</name>
        <dbReference type="ChEBI" id="CHEBI:30616"/>
    </ligand>
</feature>
<feature type="binding site" evidence="1">
    <location>
        <begin position="53"/>
        <end position="55"/>
    </location>
    <ligand>
        <name>ATP</name>
        <dbReference type="ChEBI" id="CHEBI:30616"/>
    </ligand>
</feature>
<feature type="binding site" evidence="1">
    <location>
        <position position="99"/>
    </location>
    <ligand>
        <name>ATP</name>
        <dbReference type="ChEBI" id="CHEBI:30616"/>
    </ligand>
</feature>
<feature type="binding site" evidence="1">
    <location>
        <position position="102"/>
    </location>
    <ligand>
        <name>ATP</name>
        <dbReference type="ChEBI" id="CHEBI:30616"/>
    </ligand>
</feature>
<feature type="binding site" evidence="1">
    <location>
        <position position="107"/>
    </location>
    <ligand>
        <name>ATP</name>
        <dbReference type="ChEBI" id="CHEBI:30616"/>
    </ligand>
</feature>
<feature type="binding site" evidence="1">
    <location>
        <position position="199"/>
    </location>
    <ligand>
        <name>Mg(2+)</name>
        <dbReference type="ChEBI" id="CHEBI:18420"/>
    </ligand>
</feature>
<feature type="binding site" evidence="1">
    <location>
        <position position="213"/>
    </location>
    <ligand>
        <name>Mg(2+)</name>
        <dbReference type="ChEBI" id="CHEBI:18420"/>
    </ligand>
</feature>
<feature type="binding site" evidence="1">
    <location>
        <position position="264"/>
    </location>
    <ligand>
        <name>substrate</name>
        <note>ligand shared with subunit alpha</note>
    </ligand>
</feature>
<feature type="binding site" evidence="1">
    <location>
        <begin position="321"/>
        <end position="323"/>
    </location>
    <ligand>
        <name>substrate</name>
        <note>ligand shared with subunit alpha</note>
    </ligand>
</feature>
<proteinExistence type="evidence at protein level"/>
<accession>P99071</accession>
<accession>Q99UM5</accession>
<organism>
    <name type="scientific">Staphylococcus aureus (strain N315)</name>
    <dbReference type="NCBI Taxonomy" id="158879"/>
    <lineage>
        <taxon>Bacteria</taxon>
        <taxon>Bacillati</taxon>
        <taxon>Bacillota</taxon>
        <taxon>Bacilli</taxon>
        <taxon>Bacillales</taxon>
        <taxon>Staphylococcaceae</taxon>
        <taxon>Staphylococcus</taxon>
    </lineage>
</organism>
<gene>
    <name evidence="1" type="primary">sucC</name>
    <name type="ordered locus">SA1088</name>
</gene>
<reference key="1">
    <citation type="journal article" date="2001" name="Lancet">
        <title>Whole genome sequencing of meticillin-resistant Staphylococcus aureus.</title>
        <authorList>
            <person name="Kuroda M."/>
            <person name="Ohta T."/>
            <person name="Uchiyama I."/>
            <person name="Baba T."/>
            <person name="Yuzawa H."/>
            <person name="Kobayashi I."/>
            <person name="Cui L."/>
            <person name="Oguchi A."/>
            <person name="Aoki K."/>
            <person name="Nagai Y."/>
            <person name="Lian J.-Q."/>
            <person name="Ito T."/>
            <person name="Kanamori M."/>
            <person name="Matsumaru H."/>
            <person name="Maruyama A."/>
            <person name="Murakami H."/>
            <person name="Hosoyama A."/>
            <person name="Mizutani-Ui Y."/>
            <person name="Takahashi N.K."/>
            <person name="Sawano T."/>
            <person name="Inoue R."/>
            <person name="Kaito C."/>
            <person name="Sekimizu K."/>
            <person name="Hirakawa H."/>
            <person name="Kuhara S."/>
            <person name="Goto S."/>
            <person name="Yabuzaki J."/>
            <person name="Kanehisa M."/>
            <person name="Yamashita A."/>
            <person name="Oshima K."/>
            <person name="Furuya K."/>
            <person name="Yoshino C."/>
            <person name="Shiba T."/>
            <person name="Hattori M."/>
            <person name="Ogasawara N."/>
            <person name="Hayashi H."/>
            <person name="Hiramatsu K."/>
        </authorList>
    </citation>
    <scope>NUCLEOTIDE SEQUENCE [LARGE SCALE GENOMIC DNA]</scope>
    <source>
        <strain>N315</strain>
    </source>
</reference>
<reference key="2">
    <citation type="journal article" date="2005" name="J. Microbiol. Methods">
        <title>Correlation of proteomic and transcriptomic profiles of Staphylococcus aureus during the post-exponential phase of growth.</title>
        <authorList>
            <person name="Scherl A."/>
            <person name="Francois P."/>
            <person name="Bento M."/>
            <person name="Deshusses J.M."/>
            <person name="Charbonnier Y."/>
            <person name="Converset V."/>
            <person name="Huyghe A."/>
            <person name="Walter N."/>
            <person name="Hoogland C."/>
            <person name="Appel R.D."/>
            <person name="Sanchez J.-C."/>
            <person name="Zimmermann-Ivol C.G."/>
            <person name="Corthals G.L."/>
            <person name="Hochstrasser D.F."/>
            <person name="Schrenzel J."/>
        </authorList>
    </citation>
    <scope>IDENTIFICATION BY MASS SPECTROMETRY</scope>
    <source>
        <strain>N315</strain>
    </source>
</reference>
<reference key="3">
    <citation type="submission" date="2007-10" db="UniProtKB">
        <title>Shotgun proteomic analysis of total and membrane protein extracts of S. aureus strain N315.</title>
        <authorList>
            <person name="Vaezzadeh A.R."/>
            <person name="Deshusses J."/>
            <person name="Lescuyer P."/>
            <person name="Hochstrasser D.F."/>
        </authorList>
    </citation>
    <scope>IDENTIFICATION BY MASS SPECTROMETRY [LARGE SCALE ANALYSIS]</scope>
    <source>
        <strain>N315</strain>
    </source>
</reference>
<evidence type="ECO:0000255" key="1">
    <source>
        <dbReference type="HAMAP-Rule" id="MF_00558"/>
    </source>
</evidence>
<keyword id="KW-0067">ATP-binding</keyword>
<keyword id="KW-0436">Ligase</keyword>
<keyword id="KW-0460">Magnesium</keyword>
<keyword id="KW-0479">Metal-binding</keyword>
<keyword id="KW-0547">Nucleotide-binding</keyword>
<keyword id="KW-0816">Tricarboxylic acid cycle</keyword>
<sequence length="388" mass="42056">MNIHEYQGKEIFRSMGVAVPEGRVAFTAEEAVEKAKELNSDVYVVKAQIHAGGRGKAGGVKIAKSLSEVETYAKELLGKTLVTHQTGPEGKEIKRLYIEEGCAIQKEYYVGFVIDRATDQVTLMASEEGGTEIEEVAAKTPEKIFKETIDPVIGLSPFQARRIAFNINIPKESVNKAAKFLLALYNVFIEKDCSIVEINPLVTTADGDVLALDAKINFDDNALFRHKDVVELRDLEEEDPKEIEASKHDLSYIALDGDIGCMVNGAGLAMATMDTINHFGGNPANFLDAGGSATREKVTEAFKIILGDENVKGIFVNIFGGIMKCDVIAEGIVEAVKEVDLTLPLVVRLEGTNVELGKKILKDSGLAIEPAATMAEGAQKIVKLVKEA</sequence>
<protein>
    <recommendedName>
        <fullName evidence="1">Succinate--CoA ligase [ADP-forming] subunit beta</fullName>
        <ecNumber evidence="1">6.2.1.5</ecNumber>
    </recommendedName>
    <alternativeName>
        <fullName evidence="1">Succinyl-CoA synthetase subunit beta</fullName>
        <shortName evidence="1">SCS-beta</shortName>
    </alternativeName>
</protein>
<name>SUCC_STAAN</name>
<comment type="function">
    <text evidence="1">Succinyl-CoA synthetase functions in the citric acid cycle (TCA), coupling the hydrolysis of succinyl-CoA to the synthesis of either ATP or GTP and thus represents the only step of substrate-level phosphorylation in the TCA. The beta subunit provides nucleotide specificity of the enzyme and binds the substrate succinate, while the binding sites for coenzyme A and phosphate are found in the alpha subunit.</text>
</comment>
<comment type="catalytic activity">
    <reaction evidence="1">
        <text>succinate + ATP + CoA = succinyl-CoA + ADP + phosphate</text>
        <dbReference type="Rhea" id="RHEA:17661"/>
        <dbReference type="ChEBI" id="CHEBI:30031"/>
        <dbReference type="ChEBI" id="CHEBI:30616"/>
        <dbReference type="ChEBI" id="CHEBI:43474"/>
        <dbReference type="ChEBI" id="CHEBI:57287"/>
        <dbReference type="ChEBI" id="CHEBI:57292"/>
        <dbReference type="ChEBI" id="CHEBI:456216"/>
        <dbReference type="EC" id="6.2.1.5"/>
    </reaction>
    <physiologicalReaction direction="right-to-left" evidence="1">
        <dbReference type="Rhea" id="RHEA:17663"/>
    </physiologicalReaction>
</comment>
<comment type="catalytic activity">
    <reaction evidence="1">
        <text>GTP + succinate + CoA = succinyl-CoA + GDP + phosphate</text>
        <dbReference type="Rhea" id="RHEA:22120"/>
        <dbReference type="ChEBI" id="CHEBI:30031"/>
        <dbReference type="ChEBI" id="CHEBI:37565"/>
        <dbReference type="ChEBI" id="CHEBI:43474"/>
        <dbReference type="ChEBI" id="CHEBI:57287"/>
        <dbReference type="ChEBI" id="CHEBI:57292"/>
        <dbReference type="ChEBI" id="CHEBI:58189"/>
    </reaction>
    <physiologicalReaction direction="right-to-left" evidence="1">
        <dbReference type="Rhea" id="RHEA:22122"/>
    </physiologicalReaction>
</comment>
<comment type="cofactor">
    <cofactor evidence="1">
        <name>Mg(2+)</name>
        <dbReference type="ChEBI" id="CHEBI:18420"/>
    </cofactor>
    <text evidence="1">Binds 1 Mg(2+) ion per subunit.</text>
</comment>
<comment type="pathway">
    <text evidence="1">Carbohydrate metabolism; tricarboxylic acid cycle; succinate from succinyl-CoA (ligase route): step 1/1.</text>
</comment>
<comment type="subunit">
    <text evidence="1">Heterotetramer of two alpha and two beta subunits.</text>
</comment>
<comment type="similarity">
    <text evidence="1">Belongs to the succinate/malate CoA ligase beta subunit family.</text>
</comment>